<proteinExistence type="evidence at transcript level"/>
<reference key="1">
    <citation type="journal article" date="2006" name="Biochimie">
        <title>Identification of genes and proteins involved in the pleiotropic response to arsenic stress in Caenibacter arsenoxydans, a metalloresistant beta-proteobacterium with an unsequenced genome.</title>
        <authorList>
            <person name="Carapito C."/>
            <person name="Muller D."/>
            <person name="Turlin E."/>
            <person name="Koechler S."/>
            <person name="Danchin A."/>
            <person name="Van Dorsselaer A."/>
            <person name="Leize-Wagner E."/>
            <person name="Bertin P.N."/>
            <person name="Lett M.C."/>
        </authorList>
    </citation>
    <scope>NUCLEOTIDE SEQUENCE [GENOMIC DNA]</scope>
    <scope>INDUCTION</scope>
    <source>
        <strain evidence="6">ULPAs1</strain>
    </source>
</reference>
<reference key="2">
    <citation type="journal article" date="2007" name="PLoS Genet.">
        <title>A tale of two oxidation states: bacterial colonization of arsenic-rich environments.</title>
        <authorList>
            <person name="Muller D."/>
            <person name="Medigue C."/>
            <person name="Koechler S."/>
            <person name="Barbe V."/>
            <person name="Barakat M."/>
            <person name="Talla E."/>
            <person name="Bonnefoy V."/>
            <person name="Krin E."/>
            <person name="Arsene-Ploetze F."/>
            <person name="Carapito C."/>
            <person name="Chandler M."/>
            <person name="Cournoyer B."/>
            <person name="Cruveiller S."/>
            <person name="Dossat C."/>
            <person name="Duval S."/>
            <person name="Heymann M."/>
            <person name="Leize E."/>
            <person name="Lieutaud A."/>
            <person name="Lievremont D."/>
            <person name="Makita Y."/>
            <person name="Mangenot S."/>
            <person name="Nitschke W."/>
            <person name="Ortet P."/>
            <person name="Perdrial N."/>
            <person name="Schoepp B."/>
            <person name="Siguier P."/>
            <person name="Simeonova D.D."/>
            <person name="Rouy Z."/>
            <person name="Segurens B."/>
            <person name="Turlin E."/>
            <person name="Vallenet D."/>
            <person name="van Dorsselaer A."/>
            <person name="Weiss S."/>
            <person name="Weissenbach J."/>
            <person name="Lett M.-C."/>
            <person name="Danchin A."/>
            <person name="Bertin P.N."/>
        </authorList>
    </citation>
    <scope>NUCLEOTIDE SEQUENCE [LARGE SCALE GENOMIC DNA]</scope>
    <source>
        <strain>ULPAs1</strain>
    </source>
</reference>
<name>NSPC_HERAR</name>
<feature type="chain" id="PRO_0000420243" description="Carboxynorspermidine/carboxyspermidine decarboxylase">
    <location>
        <begin position="1"/>
        <end position="365"/>
    </location>
</feature>
<feature type="binding site" evidence="2">
    <location>
        <position position="233"/>
    </location>
    <ligand>
        <name>substrate</name>
    </ligand>
</feature>
<feature type="binding site" evidence="2">
    <location>
        <position position="269"/>
    </location>
    <ligand>
        <name>substrate</name>
    </ligand>
</feature>
<feature type="modified residue" description="N6-(pyridoxal phosphate)lysine" evidence="2">
    <location>
        <position position="37"/>
    </location>
</feature>
<accession>Q5QCP2</accession>
<keyword id="KW-0963">Cytoplasm</keyword>
<keyword id="KW-0210">Decarboxylase</keyword>
<keyword id="KW-0456">Lyase</keyword>
<keyword id="KW-0620">Polyamine biosynthesis</keyword>
<keyword id="KW-0663">Pyridoxal phosphate</keyword>
<keyword id="KW-1185">Reference proteome</keyword>
<keyword id="KW-0745">Spermidine biosynthesis</keyword>
<protein>
    <recommendedName>
        <fullName evidence="2 7">Carboxynorspermidine/carboxyspermidine decarboxylase</fullName>
        <shortName evidence="3">CANS DC/CAS DC</shortName>
        <shortName evidence="2">CANSDC/CASDC</shortName>
        <ecNumber evidence="3">4.1.1.96</ecNumber>
    </recommendedName>
</protein>
<dbReference type="EC" id="4.1.1.96" evidence="3"/>
<dbReference type="EMBL" id="AY728032">
    <property type="protein sequence ID" value="AAV68371.1"/>
    <property type="molecule type" value="Genomic_DNA"/>
</dbReference>
<dbReference type="EMBL" id="CU207211">
    <property type="protein sequence ID" value="CAL61021.1"/>
    <property type="molecule type" value="Genomic_DNA"/>
</dbReference>
<dbReference type="SMR" id="Q5QCP2"/>
<dbReference type="STRING" id="204773.HEAR0832"/>
<dbReference type="KEGG" id="har:HEAR0832"/>
<dbReference type="eggNOG" id="COG0019">
    <property type="taxonomic scope" value="Bacteria"/>
</dbReference>
<dbReference type="HOGENOM" id="CLU_038560_0_0_4"/>
<dbReference type="OrthoDB" id="9804410at2"/>
<dbReference type="Proteomes" id="UP000006697">
    <property type="component" value="Chromosome"/>
</dbReference>
<dbReference type="GO" id="GO:0005737">
    <property type="term" value="C:cytoplasm"/>
    <property type="evidence" value="ECO:0007669"/>
    <property type="project" value="UniProtKB-SubCell"/>
</dbReference>
<dbReference type="GO" id="GO:0016831">
    <property type="term" value="F:carboxy-lyase activity"/>
    <property type="evidence" value="ECO:0000250"/>
    <property type="project" value="UniProtKB"/>
</dbReference>
<dbReference type="GO" id="GO:0008836">
    <property type="term" value="F:diaminopimelate decarboxylase activity"/>
    <property type="evidence" value="ECO:0007669"/>
    <property type="project" value="TreeGrafter"/>
</dbReference>
<dbReference type="GO" id="GO:0042803">
    <property type="term" value="F:protein homodimerization activity"/>
    <property type="evidence" value="ECO:0000250"/>
    <property type="project" value="UniProtKB"/>
</dbReference>
<dbReference type="GO" id="GO:0030170">
    <property type="term" value="F:pyridoxal phosphate binding"/>
    <property type="evidence" value="ECO:0000250"/>
    <property type="project" value="UniProtKB"/>
</dbReference>
<dbReference type="GO" id="GO:0009089">
    <property type="term" value="P:lysine biosynthetic process via diaminopimelate"/>
    <property type="evidence" value="ECO:0007669"/>
    <property type="project" value="TreeGrafter"/>
</dbReference>
<dbReference type="GO" id="GO:0045312">
    <property type="term" value="P:nor-spermidine biosynthetic process"/>
    <property type="evidence" value="ECO:0000250"/>
    <property type="project" value="UniProtKB"/>
</dbReference>
<dbReference type="GO" id="GO:0008295">
    <property type="term" value="P:spermidine biosynthetic process"/>
    <property type="evidence" value="ECO:0000250"/>
    <property type="project" value="UniProtKB"/>
</dbReference>
<dbReference type="CDD" id="cd06829">
    <property type="entry name" value="PLPDE_III_CANSDC"/>
    <property type="match status" value="1"/>
</dbReference>
<dbReference type="FunFam" id="3.20.20.10:FF:000012">
    <property type="entry name" value="Carboxynorspermidine/carboxyspermidine decarboxylase"/>
    <property type="match status" value="1"/>
</dbReference>
<dbReference type="Gene3D" id="3.20.20.10">
    <property type="entry name" value="Alanine racemase"/>
    <property type="match status" value="1"/>
</dbReference>
<dbReference type="Gene3D" id="2.40.37.10">
    <property type="entry name" value="Lyase, Ornithine Decarboxylase, Chain A, domain 1"/>
    <property type="match status" value="1"/>
</dbReference>
<dbReference type="InterPro" id="IPR009006">
    <property type="entry name" value="Ala_racemase/Decarboxylase_C"/>
</dbReference>
<dbReference type="InterPro" id="IPR022643">
    <property type="entry name" value="De-COase2_C"/>
</dbReference>
<dbReference type="InterPro" id="IPR005730">
    <property type="entry name" value="Nsp_de-COase"/>
</dbReference>
<dbReference type="InterPro" id="IPR029066">
    <property type="entry name" value="PLP-binding_barrel"/>
</dbReference>
<dbReference type="PANTHER" id="PTHR43727:SF1">
    <property type="entry name" value="CARBOXYNORSPERMIDINE_CARBOXYSPERMIDINE DECARBOXYLASE"/>
    <property type="match status" value="1"/>
</dbReference>
<dbReference type="PANTHER" id="PTHR43727">
    <property type="entry name" value="DIAMINOPIMELATE DECARBOXYLASE"/>
    <property type="match status" value="1"/>
</dbReference>
<dbReference type="Pfam" id="PF00278">
    <property type="entry name" value="Orn_DAP_Arg_deC"/>
    <property type="match status" value="1"/>
</dbReference>
<dbReference type="PIRSF" id="PIRSF038941">
    <property type="entry name" value="NspC"/>
    <property type="match status" value="1"/>
</dbReference>
<dbReference type="SUPFAM" id="SSF50621">
    <property type="entry name" value="Alanine racemase C-terminal domain-like"/>
    <property type="match status" value="1"/>
</dbReference>
<dbReference type="SUPFAM" id="SSF51419">
    <property type="entry name" value="PLP-binding barrel"/>
    <property type="match status" value="1"/>
</dbReference>
<dbReference type="PROSITE" id="PS00879">
    <property type="entry name" value="ODR_DC_2_2"/>
    <property type="match status" value="1"/>
</dbReference>
<gene>
    <name evidence="7" type="primary">nspC</name>
    <name type="ordered locus">HEAR0832</name>
</gene>
<sequence>MISTPYYLIDKSALLRNLQVIDQVRERSGAKVLLALKCFATWSVFDLMQQYMDGTTSSSLYEVKLGHQKFGGETHAYSVAFADHEIDEVVAHCDKIIFNSISQFQRFSSHAGNKPKGLRLNPGVSCASFDLADPARPFSRLGESDPARILSIIDQLDGVMIHNNCENRDFERFDALLTEVEQRYGEILHRLSWVSLGGGISFTTPGYSIDAFCERLRRFAQTYDVQVYLEPGEATVRDTTTLEVSVVDIGFNGKNLAVVDSSTEAHMLDLLIYRETAPIKNAQGDHAYQICGKTCLAGDIFGEARFEQPLQIGDRISIGDAGGYTMVKKNWFNGVHMPAIAIKEADGSVRAVREFSFDDYVSSLS</sequence>
<comment type="function">
    <text evidence="2">Catalyzes the decarboxylation of carboxynorspermidine and carboxyspermidine.</text>
</comment>
<comment type="catalytic activity">
    <reaction evidence="3">
        <text>carboxynorspermidine + H(+) = norspermidine + CO2</text>
        <dbReference type="Rhea" id="RHEA:34099"/>
        <dbReference type="ChEBI" id="CHEBI:15378"/>
        <dbReference type="ChEBI" id="CHEBI:16526"/>
        <dbReference type="ChEBI" id="CHEBI:57920"/>
        <dbReference type="ChEBI" id="CHEBI:65070"/>
        <dbReference type="EC" id="4.1.1.96"/>
    </reaction>
</comment>
<comment type="catalytic activity">
    <reaction evidence="3">
        <text>carboxyspermidine + H(+) = spermidine + CO2</text>
        <dbReference type="Rhea" id="RHEA:34095"/>
        <dbReference type="ChEBI" id="CHEBI:15378"/>
        <dbReference type="ChEBI" id="CHEBI:16526"/>
        <dbReference type="ChEBI" id="CHEBI:57834"/>
        <dbReference type="ChEBI" id="CHEBI:65072"/>
        <dbReference type="EC" id="4.1.1.96"/>
    </reaction>
</comment>
<comment type="cofactor">
    <cofactor evidence="2">
        <name>pyridoxal 5'-phosphate</name>
        <dbReference type="ChEBI" id="CHEBI:597326"/>
    </cofactor>
</comment>
<comment type="subunit">
    <text evidence="2">Homodimer.</text>
</comment>
<comment type="subcellular location">
    <subcellularLocation>
        <location evidence="1">Cytoplasm</location>
    </subcellularLocation>
</comment>
<comment type="induction">
    <text evidence="5">By arsenic.</text>
</comment>
<comment type="similarity">
    <text evidence="4">Belongs to the Orn/Lys/Arg decarboxylase class-II family. NspC subfamily.</text>
</comment>
<organism>
    <name type="scientific">Herminiimonas arsenicoxydans</name>
    <dbReference type="NCBI Taxonomy" id="204773"/>
    <lineage>
        <taxon>Bacteria</taxon>
        <taxon>Pseudomonadati</taxon>
        <taxon>Pseudomonadota</taxon>
        <taxon>Betaproteobacteria</taxon>
        <taxon>Burkholderiales</taxon>
        <taxon>Oxalobacteraceae</taxon>
        <taxon>Herminiimonas</taxon>
    </lineage>
</organism>
<evidence type="ECO:0000250" key="1"/>
<evidence type="ECO:0000250" key="2">
    <source>
        <dbReference type="UniProtKB" id="A8FNH9"/>
    </source>
</evidence>
<evidence type="ECO:0000250" key="3">
    <source>
        <dbReference type="UniProtKB" id="Q56575"/>
    </source>
</evidence>
<evidence type="ECO:0000255" key="4"/>
<evidence type="ECO:0000269" key="5">
    <source>
    </source>
</evidence>
<evidence type="ECO:0000312" key="6">
    <source>
        <dbReference type="EMBL" id="AAV68371.1"/>
    </source>
</evidence>
<evidence type="ECO:0000312" key="7">
    <source>
        <dbReference type="EMBL" id="CAL61021.1"/>
    </source>
</evidence>